<dbReference type="EMBL" id="U60315">
    <property type="protein sequence ID" value="AAC55287.1"/>
    <property type="molecule type" value="Genomic_DNA"/>
</dbReference>
<dbReference type="EMBL" id="U86888">
    <property type="protein sequence ID" value="AAB57923.1"/>
    <property type="molecule type" value="Genomic_DNA"/>
</dbReference>
<dbReference type="PIR" id="T30761">
    <property type="entry name" value="T30761"/>
</dbReference>
<dbReference type="RefSeq" id="NP_044110.1">
    <property type="nucleotide sequence ID" value="NC_001731.1"/>
</dbReference>
<dbReference type="PDB" id="2BBR">
    <property type="method" value="X-ray"/>
    <property type="resolution" value="1.20 A"/>
    <property type="chains" value="A=1-187"/>
</dbReference>
<dbReference type="PDB" id="2BBZ">
    <property type="method" value="X-ray"/>
    <property type="resolution" value="3.80 A"/>
    <property type="chains" value="A/B/C/D=1-241"/>
</dbReference>
<dbReference type="PDB" id="2F1S">
    <property type="method" value="X-ray"/>
    <property type="resolution" value="1.40 A"/>
    <property type="chains" value="A=1-183"/>
</dbReference>
<dbReference type="PDBsum" id="2BBR"/>
<dbReference type="PDBsum" id="2BBZ"/>
<dbReference type="PDBsum" id="2F1S"/>
<dbReference type="SMR" id="Q98325"/>
<dbReference type="GeneID" id="1487017"/>
<dbReference type="KEGG" id="vg:1487017"/>
<dbReference type="Reactome" id="R-HSA-140534">
    <property type="pathway name" value="Caspase activation via Death Receptors in the presence of ligand"/>
</dbReference>
<dbReference type="EvolutionaryTrace" id="Q98325"/>
<dbReference type="Proteomes" id="UP000000869">
    <property type="component" value="Genome"/>
</dbReference>
<dbReference type="GO" id="GO:0030430">
    <property type="term" value="C:host cell cytoplasm"/>
    <property type="evidence" value="ECO:0000314"/>
    <property type="project" value="UniProtKB"/>
</dbReference>
<dbReference type="GO" id="GO:0042025">
    <property type="term" value="C:host cell nucleus"/>
    <property type="evidence" value="ECO:0000314"/>
    <property type="project" value="UniProtKB"/>
</dbReference>
<dbReference type="GO" id="GO:2001234">
    <property type="term" value="P:negative regulation of apoptotic signaling pathway"/>
    <property type="evidence" value="ECO:0000314"/>
    <property type="project" value="DisProt"/>
</dbReference>
<dbReference type="GO" id="GO:0060545">
    <property type="term" value="P:positive regulation of necroptotic process"/>
    <property type="evidence" value="ECO:0000315"/>
    <property type="project" value="UniProtKB"/>
</dbReference>
<dbReference type="GO" id="GO:0033668">
    <property type="term" value="P:symbiont-mediated suppression of host apoptosis"/>
    <property type="evidence" value="ECO:0000314"/>
    <property type="project" value="UniProtKB"/>
</dbReference>
<dbReference type="GO" id="GO:0140321">
    <property type="term" value="P:symbiont-mediated suppression of host autophagy"/>
    <property type="evidence" value="ECO:0000314"/>
    <property type="project" value="UniProtKB"/>
</dbReference>
<dbReference type="GO" id="GO:0085034">
    <property type="term" value="P:symbiont-mediated suppression of host NF-kappaB cascade"/>
    <property type="evidence" value="ECO:0000314"/>
    <property type="project" value="UniProtKB"/>
</dbReference>
<dbReference type="CDD" id="cd08337">
    <property type="entry name" value="DED_c-FLIP_r1"/>
    <property type="match status" value="1"/>
</dbReference>
<dbReference type="CDD" id="cd08775">
    <property type="entry name" value="DED_Caspase-like_r2"/>
    <property type="match status" value="1"/>
</dbReference>
<dbReference type="Gene3D" id="1.10.533.10">
    <property type="entry name" value="Death Domain, Fas"/>
    <property type="match status" value="2"/>
</dbReference>
<dbReference type="InterPro" id="IPR011029">
    <property type="entry name" value="DEATH-like_dom_sf"/>
</dbReference>
<dbReference type="InterPro" id="IPR001875">
    <property type="entry name" value="DED_dom"/>
</dbReference>
<dbReference type="PANTHER" id="PTHR48169:SF3">
    <property type="entry name" value="CASP8 AND FADD LIKE APOPTOSIS REGULATOR"/>
    <property type="match status" value="1"/>
</dbReference>
<dbReference type="PANTHER" id="PTHR48169">
    <property type="entry name" value="DED DOMAIN-CONTAINING PROTEIN"/>
    <property type="match status" value="1"/>
</dbReference>
<dbReference type="Pfam" id="PF01335">
    <property type="entry name" value="DED"/>
    <property type="match status" value="1"/>
</dbReference>
<dbReference type="SMART" id="SM00031">
    <property type="entry name" value="DED"/>
    <property type="match status" value="2"/>
</dbReference>
<dbReference type="SUPFAM" id="SSF47986">
    <property type="entry name" value="DEATH domain"/>
    <property type="match status" value="2"/>
</dbReference>
<dbReference type="PROSITE" id="PS50168">
    <property type="entry name" value="DED"/>
    <property type="match status" value="2"/>
</dbReference>
<gene>
    <name type="ordered locus">MC159L</name>
    <name type="ORF">H-H2.2</name>
</gene>
<organismHost>
    <name type="scientific">Homo sapiens</name>
    <name type="common">Human</name>
    <dbReference type="NCBI Taxonomy" id="9606"/>
</organismHost>
<accession>Q98325</accession>
<accession>O11298</accession>
<protein>
    <recommendedName>
        <fullName>Viral CASP8 and FADD-like apoptosis regulator</fullName>
        <shortName>v-CFLAR</shortName>
    </recommendedName>
    <alternativeName>
        <fullName>Viral FLICE-inhibitory protein</fullName>
        <shortName>v-FLIP</shortName>
    </alternativeName>
</protein>
<reference key="1">
    <citation type="journal article" date="1996" name="Science">
        <title>Genome sequence of a human tumorigenic poxvirus: prediction of specific host response-evasion genes.</title>
        <authorList>
            <person name="Senkevich T.G."/>
            <person name="Bugert J.J."/>
            <person name="Sisler J.R."/>
            <person name="Koonin E.V."/>
            <person name="Darai G."/>
            <person name="Moss B."/>
        </authorList>
    </citation>
    <scope>NUCLEOTIDE SEQUENCE [LARGE SCALE GENOMIC DNA]</scope>
</reference>
<reference key="2">
    <citation type="journal article" date="1997" name="Virus Genes">
        <title>A random DNA sequencing, computer-based approach for the generation of a gene map of Molluscum contagiosum virus.</title>
        <authorList>
            <person name="Moratilla M."/>
            <person name="Agromayor M."/>
            <person name="Nunez A."/>
            <person name="Funes J.M."/>
            <person name="Varas A.J."/>
            <person name="Lopez-Estebaranz J.L."/>
            <person name="Esteban M."/>
            <person name="Martin-Gallardo A."/>
        </authorList>
    </citation>
    <scope>NUCLEOTIDE SEQUENCE [GENOMIC DNA] OF 91-241</scope>
</reference>
<reference key="3">
    <citation type="journal article" date="1997" name="Nature">
        <title>Viral FLICE-inhibitory proteins (FLIPs) prevent apoptosis induced by death receptors.</title>
        <authorList>
            <person name="Thome M."/>
            <person name="Schneider P."/>
            <person name="Hofmann K."/>
            <person name="Fickenscher H."/>
            <person name="Meinl E."/>
            <person name="Neipel F."/>
            <person name="Mattmann C."/>
            <person name="Burns K."/>
            <person name="Bodmer J.-L."/>
            <person name="Schroeter M."/>
            <person name="Scaffidi C."/>
            <person name="Krammer P.H."/>
            <person name="Peter M.E."/>
            <person name="Tschopp J."/>
        </authorList>
    </citation>
    <scope>FUNCTION</scope>
</reference>
<reference key="4">
    <citation type="journal article" date="1997" name="Proc. Natl. Acad. Sci. U.S.A.">
        <title>Death effector domain-containing herpesvirus and poxvirus proteins inhibit both Fas- and TNFR1-induced apoptosis.</title>
        <authorList>
            <person name="Bertin J."/>
            <person name="Armstrong R.C."/>
            <person name="Ottilie S."/>
            <person name="Martin D.A."/>
            <person name="Wang Y."/>
            <person name="Banks S."/>
            <person name="Wang G.-H."/>
            <person name="Senkevich T.G."/>
            <person name="Alnemri E.S."/>
            <person name="Moss B."/>
            <person name="Lenardo M.J."/>
            <person name="Tomaselli K.J."/>
            <person name="Cohen J.I."/>
        </authorList>
    </citation>
    <scope>FUNCTION</scope>
</reference>
<reference key="5">
    <citation type="journal article" date="1999" name="Genes Cells">
        <title>Requirement of cooperative functions of two repeated death effector domains in caspase-8 and in MC159 for induction and inhibition of apoptosis, respectively.</title>
        <authorList>
            <person name="Tsukumo S."/>
            <person name="Yonehara S."/>
        </authorList>
    </citation>
    <scope>CHARACTERIZATION</scope>
</reference>
<reference key="6">
    <citation type="journal article" date="2005" name="Virology">
        <title>The MCV MC159 protein inhibits late, but not early, events of TNF-alpha-induced NF-kappaB activation.</title>
        <authorList>
            <person name="Murao L.E."/>
            <person name="Shisler J.L."/>
        </authorList>
    </citation>
    <scope>FUNCTION</scope>
    <scope>INTERACTION WITH HOST TRAF2</scope>
</reference>
<reference key="7">
    <citation type="journal article" date="2012" name="J. Immunol.">
        <title>The MC159 protein from the molluscum contagiosum poxvirus inhibits NF-kappaB activation by interacting with the IkappaB kinase complex.</title>
        <authorList>
            <person name="Randall C.M."/>
            <person name="Jokela J.A."/>
            <person name="Shisler J.L."/>
        </authorList>
    </citation>
    <scope>FUNCTION</scope>
    <scope>INTERACTION WITH HOST IKBKG</scope>
</reference>
<reference key="8">
    <citation type="journal article" date="2017" name="J. Virol.">
        <title>Molluscum contagiosum virus MC159 abrogates cIAP1-NEMO interactions and inhibits NEMO polyubiquitination.</title>
        <authorList>
            <person name="Biswas S."/>
            <person name="Shisler J.L."/>
        </authorList>
    </citation>
    <scope>FUNCTION</scope>
    <scope>INTERACTION WITH HOST IKBKG</scope>
</reference>
<reference key="9">
    <citation type="journal article" date="2005" name="Mol. Cell">
        <title>Crystal structure of MC159 reveals molecular mechanism of DISC assembly and FLIP inhibition.</title>
        <authorList>
            <person name="Yang J.K."/>
            <person name="Wang L."/>
            <person name="Zheng L."/>
            <person name="Wan F."/>
            <person name="Ahmed M."/>
            <person name="Lenardo M.J."/>
            <person name="Wu H."/>
        </authorList>
    </citation>
    <scope>X-RAY CRYSTALLOGRAPHY (1.20 ANGSTROMS)</scope>
    <scope>INTERACTION WITH HOST FAS AND FADD</scope>
</reference>
<reference key="10">
    <citation type="journal article" date="2019" name="J. Virol.">
        <title>MC159 of molluscum contagiosum virus suppresses autophagy by recruiting cellular SH3BP4 via an SH3 domain-mediated interaction.</title>
        <authorList>
            <person name="Schmotz C."/>
            <person name="Ugurlu H."/>
            <person name="Vilen S."/>
            <person name="Shrestha S."/>
            <person name="Fagerlund R."/>
            <person name="Saksela K."/>
        </authorList>
    </citation>
    <scope>FUNCTION</scope>
    <scope>SUBCELLULAR LOCATION</scope>
    <scope>INTERACTION WITH HOST SH3BP4</scope>
    <scope>MUTAGENESIS OF PRO-8 AND PRO-11</scope>
</reference>
<reference key="11">
    <citation type="journal article" date="2006" name="J. Biol. Chem.">
        <title>Crystal structure of a viral FLIP: insights into FLIP-mediated inhibition of death receptor signaling.</title>
        <authorList>
            <person name="Li F.Y."/>
            <person name="Jeffrey P.D."/>
            <person name="Yu J.W."/>
            <person name="Shi Y."/>
        </authorList>
    </citation>
    <scope>X-RAY CRYSTALLOGRAPHY (1.40 ANGSTROMS) OF 1-183</scope>
    <scope>DOMAIN</scope>
</reference>
<comment type="function">
    <text evidence="3 6 7 8 9 10">Inhibits TNFRSF1A, TNFRSF6/FAS and TNFRSF12 induced apoptosis. Directs the degradation of host NFKBIB but not NFKBIA. Also suppresses host NF-kappa-B activation by interacting with and preventing ubiquitination of host NEMO/IKBKG, the NF-kappa-B essential modulator subunit of the IKK complex (PubMed:28515292). Interferes with host CASP8/caspase-8 recruitment and activation at the death-inducing signaling complex (DISC). May lead to higher virus production and contribute to virus persistence and oncogenicity. Also participates in the inhibition of host autophagy by interacting with host SH3BP4 (PubMed:30842330).</text>
</comment>
<comment type="subunit">
    <text evidence="3 5 6 7 8">Associates with the death-inducing signaling complex (DISC) formed by TNFRSF6/FAS, FADD and CASP8. Interacts with FADD (PubMed:16364918). Interacts with host TRAF2 (PubMed:16040075). Interacts with host NEMO/IKBKG (via N-terminus) (PubMed:28515292). Interacts with host SH3BP4; this interaction plays an important in the suppression of host autophagy (PubMed:30842330).</text>
</comment>
<comment type="subcellular location">
    <subcellularLocation>
        <location evidence="8">Host cytoplasm</location>
    </subcellularLocation>
    <subcellularLocation>
        <location evidence="8">Host nucleus</location>
    </subcellularLocation>
</comment>
<name>CFLA_MCV1</name>
<keyword id="KW-0002">3D-structure</keyword>
<keyword id="KW-0053">Apoptosis</keyword>
<keyword id="KW-1035">Host cytoplasm</keyword>
<keyword id="KW-1048">Host nucleus</keyword>
<keyword id="KW-0945">Host-virus interaction</keyword>
<keyword id="KW-1082">Inhibition of host apoptosis by viral FLIP-like protein</keyword>
<keyword id="KW-1083">Inhibition of host autophagy by virus</keyword>
<keyword id="KW-1119">Modulation of host cell apoptosis by virus</keyword>
<keyword id="KW-1185">Reference proteome</keyword>
<keyword id="KW-0677">Repeat</keyword>
<proteinExistence type="evidence at protein level"/>
<sequence>MSDSKEVPSLPFLRHLLEELDSHEDSLLLFLCHDAAPGCTTVTQALCSLSQQRKLTLAALVEMLYVLQRMDLLKSRFGLSKEGAEQLLGTSFLTRYRKLMVCVGEELDSSELRALRLFACNLNPSLSTALSESSRFVELVLALENVGLVSPSSVSVLADMLRTLRRLDLCQQLVEYEQQEQARYRYCYAASPSLPVRTLRRGHGASEHEQLCMPVQESSDSPELLRTPVQESSSDSPEQTT</sequence>
<evidence type="ECO:0000255" key="1">
    <source>
        <dbReference type="PROSITE-ProRule" id="PRU00065"/>
    </source>
</evidence>
<evidence type="ECO:0000256" key="2">
    <source>
        <dbReference type="SAM" id="MobiDB-lite"/>
    </source>
</evidence>
<evidence type="ECO:0000269" key="3">
    <source>
    </source>
</evidence>
<evidence type="ECO:0000269" key="4">
    <source>
    </source>
</evidence>
<evidence type="ECO:0000269" key="5">
    <source>
    </source>
</evidence>
<evidence type="ECO:0000269" key="6">
    <source>
    </source>
</evidence>
<evidence type="ECO:0000269" key="7">
    <source>
    </source>
</evidence>
<evidence type="ECO:0000269" key="8">
    <source>
    </source>
</evidence>
<evidence type="ECO:0000269" key="9">
    <source>
    </source>
</evidence>
<evidence type="ECO:0000269" key="10">
    <source>
    </source>
</evidence>
<evidence type="ECO:0007829" key="11">
    <source>
        <dbReference type="PDB" id="2BBR"/>
    </source>
</evidence>
<organism>
    <name type="scientific">Molluscum contagiosum virus subtype 1</name>
    <name type="common">MOCV</name>
    <name type="synonym">MCVI</name>
    <dbReference type="NCBI Taxonomy" id="10280"/>
    <lineage>
        <taxon>Viruses</taxon>
        <taxon>Varidnaviria</taxon>
        <taxon>Bamfordvirae</taxon>
        <taxon>Nucleocytoviricota</taxon>
        <taxon>Pokkesviricetes</taxon>
        <taxon>Chitovirales</taxon>
        <taxon>Poxviridae</taxon>
        <taxon>Chordopoxvirinae</taxon>
        <taxon>Molluscipoxvirus</taxon>
        <taxon>Molluscum contagiosum virus</taxon>
    </lineage>
</organism>
<feature type="chain" id="PRO_0000072819" description="Viral CASP8 and FADD-like apoptosis regulator">
    <location>
        <begin position="1"/>
        <end position="241"/>
    </location>
</feature>
<feature type="domain" description="DED 1" evidence="1 4">
    <location>
        <begin position="8"/>
        <end position="78"/>
    </location>
</feature>
<feature type="domain" description="DED 2" evidence="1 4">
    <location>
        <begin position="95"/>
        <end position="175"/>
    </location>
</feature>
<feature type="region of interest" description="Disordered" evidence="2">
    <location>
        <begin position="212"/>
        <end position="241"/>
    </location>
</feature>
<feature type="compositionally biased region" description="Polar residues" evidence="2">
    <location>
        <begin position="229"/>
        <end position="241"/>
    </location>
</feature>
<feature type="mutagenesis site" description="Complete loss of autophagy inhibition; in association with A-11." evidence="8">
    <original>P</original>
    <variation>A</variation>
    <location>
        <position position="8"/>
    </location>
</feature>
<feature type="mutagenesis site" description="Complete loss of autophagy inhibition; in association with A-8." evidence="8">
    <original>P</original>
    <variation>A</variation>
    <location>
        <position position="11"/>
    </location>
</feature>
<feature type="helix" evidence="11">
    <location>
        <begin position="4"/>
        <end position="6"/>
    </location>
</feature>
<feature type="helix" evidence="11">
    <location>
        <begin position="10"/>
        <end position="17"/>
    </location>
</feature>
<feature type="helix" evidence="11">
    <location>
        <begin position="22"/>
        <end position="31"/>
    </location>
</feature>
<feature type="turn" evidence="11">
    <location>
        <begin position="32"/>
        <end position="35"/>
    </location>
</feature>
<feature type="helix" evidence="11">
    <location>
        <begin position="42"/>
        <end position="51"/>
    </location>
</feature>
<feature type="helix" evidence="11">
    <location>
        <begin position="57"/>
        <end position="66"/>
    </location>
</feature>
<feature type="helix" evidence="11">
    <location>
        <begin position="70"/>
        <end position="77"/>
    </location>
</feature>
<feature type="helix" evidence="11">
    <location>
        <begin position="81"/>
        <end position="85"/>
    </location>
</feature>
<feature type="turn" evidence="11">
    <location>
        <begin position="86"/>
        <end position="89"/>
    </location>
</feature>
<feature type="strand" evidence="11">
    <location>
        <begin position="90"/>
        <end position="92"/>
    </location>
</feature>
<feature type="helix" evidence="11">
    <location>
        <begin position="95"/>
        <end position="104"/>
    </location>
</feature>
<feature type="helix" evidence="11">
    <location>
        <begin position="109"/>
        <end position="122"/>
    </location>
</feature>
<feature type="helix" evidence="11">
    <location>
        <begin position="124"/>
        <end position="129"/>
    </location>
</feature>
<feature type="helix" evidence="11">
    <location>
        <begin position="136"/>
        <end position="145"/>
    </location>
</feature>
<feature type="helix" evidence="11">
    <location>
        <begin position="155"/>
        <end position="163"/>
    </location>
</feature>
<feature type="helix" evidence="11">
    <location>
        <begin position="167"/>
        <end position="187"/>
    </location>
</feature>